<reference key="1">
    <citation type="journal article" date="1989" name="EMBO J.">
        <title>The E2 antigen, a 32 kd glycoprotein involved in T-cell adhesion processes, is the MIC2 gene product.</title>
        <authorList>
            <person name="Gelin C."/>
            <person name="Aubrit F."/>
            <person name="Phalipon A."/>
            <person name="Raynal B."/>
            <person name="Cole S."/>
            <person name="Kaczorek M."/>
            <person name="Bernard A."/>
        </authorList>
    </citation>
    <scope>NUCLEOTIDE SEQUENCE [MRNA] (ISOFORM I)</scope>
    <scope>PROTEIN SEQUENCE OF 23-39</scope>
    <source>
        <tissue>T-cell</tissue>
    </source>
</reference>
<reference key="2">
    <citation type="submission" date="1996-12" db="EMBL/GenBank/DDBJ databases">
        <title>An alternative splicing form of CD99 (MIC2).</title>
        <authorList>
            <person name="Park S.H."/>
            <person name="Hahn J.H."/>
            <person name="Kim M.K."/>
            <person name="Sohn H.W."/>
            <person name="Choi E.Y."/>
            <person name="Kim S.H."/>
        </authorList>
    </citation>
    <scope>NUCLEOTIDE SEQUENCE [MRNA] (ISOFORM II)</scope>
</reference>
<reference key="3">
    <citation type="submission" date="2004-05" db="EMBL/GenBank/DDBJ databases">
        <title>Cloning of human full open reading frames in Gateway(TM) system entry vector (pDONR201).</title>
        <authorList>
            <person name="Ebert L."/>
            <person name="Schick M."/>
            <person name="Neubert P."/>
            <person name="Schatten R."/>
            <person name="Henze S."/>
            <person name="Korn B."/>
        </authorList>
    </citation>
    <scope>NUCLEOTIDE SEQUENCE [LARGE SCALE MRNA] (ISOFORM I)</scope>
</reference>
<reference key="4">
    <citation type="journal article" date="2005" name="Nature">
        <title>The DNA sequence of the human X chromosome.</title>
        <authorList>
            <person name="Ross M.T."/>
            <person name="Grafham D.V."/>
            <person name="Coffey A.J."/>
            <person name="Scherer S."/>
            <person name="McLay K."/>
            <person name="Muzny D."/>
            <person name="Platzer M."/>
            <person name="Howell G.R."/>
            <person name="Burrows C."/>
            <person name="Bird C.P."/>
            <person name="Frankish A."/>
            <person name="Lovell F.L."/>
            <person name="Howe K.L."/>
            <person name="Ashurst J.L."/>
            <person name="Fulton R.S."/>
            <person name="Sudbrak R."/>
            <person name="Wen G."/>
            <person name="Jones M.C."/>
            <person name="Hurles M.E."/>
            <person name="Andrews T.D."/>
            <person name="Scott C.E."/>
            <person name="Searle S."/>
            <person name="Ramser J."/>
            <person name="Whittaker A."/>
            <person name="Deadman R."/>
            <person name="Carter N.P."/>
            <person name="Hunt S.E."/>
            <person name="Chen R."/>
            <person name="Cree A."/>
            <person name="Gunaratne P."/>
            <person name="Havlak P."/>
            <person name="Hodgson A."/>
            <person name="Metzker M.L."/>
            <person name="Richards S."/>
            <person name="Scott G."/>
            <person name="Steffen D."/>
            <person name="Sodergren E."/>
            <person name="Wheeler D.A."/>
            <person name="Worley K.C."/>
            <person name="Ainscough R."/>
            <person name="Ambrose K.D."/>
            <person name="Ansari-Lari M.A."/>
            <person name="Aradhya S."/>
            <person name="Ashwell R.I."/>
            <person name="Babbage A.K."/>
            <person name="Bagguley C.L."/>
            <person name="Ballabio A."/>
            <person name="Banerjee R."/>
            <person name="Barker G.E."/>
            <person name="Barlow K.F."/>
            <person name="Barrett I.P."/>
            <person name="Bates K.N."/>
            <person name="Beare D.M."/>
            <person name="Beasley H."/>
            <person name="Beasley O."/>
            <person name="Beck A."/>
            <person name="Bethel G."/>
            <person name="Blechschmidt K."/>
            <person name="Brady N."/>
            <person name="Bray-Allen S."/>
            <person name="Bridgeman A.M."/>
            <person name="Brown A.J."/>
            <person name="Brown M.J."/>
            <person name="Bonnin D."/>
            <person name="Bruford E.A."/>
            <person name="Buhay C."/>
            <person name="Burch P."/>
            <person name="Burford D."/>
            <person name="Burgess J."/>
            <person name="Burrill W."/>
            <person name="Burton J."/>
            <person name="Bye J.M."/>
            <person name="Carder C."/>
            <person name="Carrel L."/>
            <person name="Chako J."/>
            <person name="Chapman J.C."/>
            <person name="Chavez D."/>
            <person name="Chen E."/>
            <person name="Chen G."/>
            <person name="Chen Y."/>
            <person name="Chen Z."/>
            <person name="Chinault C."/>
            <person name="Ciccodicola A."/>
            <person name="Clark S.Y."/>
            <person name="Clarke G."/>
            <person name="Clee C.M."/>
            <person name="Clegg S."/>
            <person name="Clerc-Blankenburg K."/>
            <person name="Clifford K."/>
            <person name="Cobley V."/>
            <person name="Cole C.G."/>
            <person name="Conquer J.S."/>
            <person name="Corby N."/>
            <person name="Connor R.E."/>
            <person name="David R."/>
            <person name="Davies J."/>
            <person name="Davis C."/>
            <person name="Davis J."/>
            <person name="Delgado O."/>
            <person name="Deshazo D."/>
            <person name="Dhami P."/>
            <person name="Ding Y."/>
            <person name="Dinh H."/>
            <person name="Dodsworth S."/>
            <person name="Draper H."/>
            <person name="Dugan-Rocha S."/>
            <person name="Dunham A."/>
            <person name="Dunn M."/>
            <person name="Durbin K.J."/>
            <person name="Dutta I."/>
            <person name="Eades T."/>
            <person name="Ellwood M."/>
            <person name="Emery-Cohen A."/>
            <person name="Errington H."/>
            <person name="Evans K.L."/>
            <person name="Faulkner L."/>
            <person name="Francis F."/>
            <person name="Frankland J."/>
            <person name="Fraser A.E."/>
            <person name="Galgoczy P."/>
            <person name="Gilbert J."/>
            <person name="Gill R."/>
            <person name="Gloeckner G."/>
            <person name="Gregory S.G."/>
            <person name="Gribble S."/>
            <person name="Griffiths C."/>
            <person name="Grocock R."/>
            <person name="Gu Y."/>
            <person name="Gwilliam R."/>
            <person name="Hamilton C."/>
            <person name="Hart E.A."/>
            <person name="Hawes A."/>
            <person name="Heath P.D."/>
            <person name="Heitmann K."/>
            <person name="Hennig S."/>
            <person name="Hernandez J."/>
            <person name="Hinzmann B."/>
            <person name="Ho S."/>
            <person name="Hoffs M."/>
            <person name="Howden P.J."/>
            <person name="Huckle E.J."/>
            <person name="Hume J."/>
            <person name="Hunt P.J."/>
            <person name="Hunt A.R."/>
            <person name="Isherwood J."/>
            <person name="Jacob L."/>
            <person name="Johnson D."/>
            <person name="Jones S."/>
            <person name="de Jong P.J."/>
            <person name="Joseph S.S."/>
            <person name="Keenan S."/>
            <person name="Kelly S."/>
            <person name="Kershaw J.K."/>
            <person name="Khan Z."/>
            <person name="Kioschis P."/>
            <person name="Klages S."/>
            <person name="Knights A.J."/>
            <person name="Kosiura A."/>
            <person name="Kovar-Smith C."/>
            <person name="Laird G.K."/>
            <person name="Langford C."/>
            <person name="Lawlor S."/>
            <person name="Leversha M."/>
            <person name="Lewis L."/>
            <person name="Liu W."/>
            <person name="Lloyd C."/>
            <person name="Lloyd D.M."/>
            <person name="Loulseged H."/>
            <person name="Loveland J.E."/>
            <person name="Lovell J.D."/>
            <person name="Lozado R."/>
            <person name="Lu J."/>
            <person name="Lyne R."/>
            <person name="Ma J."/>
            <person name="Maheshwari M."/>
            <person name="Matthews L.H."/>
            <person name="McDowall J."/>
            <person name="McLaren S."/>
            <person name="McMurray A."/>
            <person name="Meidl P."/>
            <person name="Meitinger T."/>
            <person name="Milne S."/>
            <person name="Miner G."/>
            <person name="Mistry S.L."/>
            <person name="Morgan M."/>
            <person name="Morris S."/>
            <person name="Mueller I."/>
            <person name="Mullikin J.C."/>
            <person name="Nguyen N."/>
            <person name="Nordsiek G."/>
            <person name="Nyakatura G."/>
            <person name="O'dell C.N."/>
            <person name="Okwuonu G."/>
            <person name="Palmer S."/>
            <person name="Pandian R."/>
            <person name="Parker D."/>
            <person name="Parrish J."/>
            <person name="Pasternak S."/>
            <person name="Patel D."/>
            <person name="Pearce A.V."/>
            <person name="Pearson D.M."/>
            <person name="Pelan S.E."/>
            <person name="Perez L."/>
            <person name="Porter K.M."/>
            <person name="Ramsey Y."/>
            <person name="Reichwald K."/>
            <person name="Rhodes S."/>
            <person name="Ridler K.A."/>
            <person name="Schlessinger D."/>
            <person name="Schueler M.G."/>
            <person name="Sehra H.K."/>
            <person name="Shaw-Smith C."/>
            <person name="Shen H."/>
            <person name="Sheridan E.M."/>
            <person name="Shownkeen R."/>
            <person name="Skuce C.D."/>
            <person name="Smith M.L."/>
            <person name="Sotheran E.C."/>
            <person name="Steingruber H.E."/>
            <person name="Steward C.A."/>
            <person name="Storey R."/>
            <person name="Swann R.M."/>
            <person name="Swarbreck D."/>
            <person name="Tabor P.E."/>
            <person name="Taudien S."/>
            <person name="Taylor T."/>
            <person name="Teague B."/>
            <person name="Thomas K."/>
            <person name="Thorpe A."/>
            <person name="Timms K."/>
            <person name="Tracey A."/>
            <person name="Trevanion S."/>
            <person name="Tromans A.C."/>
            <person name="d'Urso M."/>
            <person name="Verduzco D."/>
            <person name="Villasana D."/>
            <person name="Waldron L."/>
            <person name="Wall M."/>
            <person name="Wang Q."/>
            <person name="Warren J."/>
            <person name="Warry G.L."/>
            <person name="Wei X."/>
            <person name="West A."/>
            <person name="Whitehead S.L."/>
            <person name="Whiteley M.N."/>
            <person name="Wilkinson J.E."/>
            <person name="Willey D.L."/>
            <person name="Williams G."/>
            <person name="Williams L."/>
            <person name="Williamson A."/>
            <person name="Williamson H."/>
            <person name="Wilming L."/>
            <person name="Woodmansey R.L."/>
            <person name="Wray P.W."/>
            <person name="Yen J."/>
            <person name="Zhang J."/>
            <person name="Zhou J."/>
            <person name="Zoghbi H."/>
            <person name="Zorilla S."/>
            <person name="Buck D."/>
            <person name="Reinhardt R."/>
            <person name="Poustka A."/>
            <person name="Rosenthal A."/>
            <person name="Lehrach H."/>
            <person name="Meindl A."/>
            <person name="Minx P.J."/>
            <person name="Hillier L.W."/>
            <person name="Willard H.F."/>
            <person name="Wilson R.K."/>
            <person name="Waterston R.H."/>
            <person name="Rice C.M."/>
            <person name="Vaudin M."/>
            <person name="Coulson A."/>
            <person name="Nelson D.L."/>
            <person name="Weinstock G."/>
            <person name="Sulston J.E."/>
            <person name="Durbin R.M."/>
            <person name="Hubbard T."/>
            <person name="Gibbs R.A."/>
            <person name="Beck S."/>
            <person name="Rogers J."/>
            <person name="Bentley D.R."/>
        </authorList>
    </citation>
    <scope>NUCLEOTIDE SEQUENCE [LARGE SCALE GENOMIC DNA]</scope>
</reference>
<reference key="5">
    <citation type="submission" date="2005-07" db="EMBL/GenBank/DDBJ databases">
        <authorList>
            <person name="Mural R.J."/>
            <person name="Istrail S."/>
            <person name="Sutton G.G."/>
            <person name="Florea L."/>
            <person name="Halpern A.L."/>
            <person name="Mobarry C.M."/>
            <person name="Lippert R."/>
            <person name="Walenz B."/>
            <person name="Shatkay H."/>
            <person name="Dew I."/>
            <person name="Miller J.R."/>
            <person name="Flanigan M.J."/>
            <person name="Edwards N.J."/>
            <person name="Bolanos R."/>
            <person name="Fasulo D."/>
            <person name="Halldorsson B.V."/>
            <person name="Hannenhalli S."/>
            <person name="Turner R."/>
            <person name="Yooseph S."/>
            <person name="Lu F."/>
            <person name="Nusskern D.R."/>
            <person name="Shue B.C."/>
            <person name="Zheng X.H."/>
            <person name="Zhong F."/>
            <person name="Delcher A.L."/>
            <person name="Huson D.H."/>
            <person name="Kravitz S.A."/>
            <person name="Mouchard L."/>
            <person name="Reinert K."/>
            <person name="Remington K.A."/>
            <person name="Clark A.G."/>
            <person name="Waterman M.S."/>
            <person name="Eichler E.E."/>
            <person name="Adams M.D."/>
            <person name="Hunkapiller M.W."/>
            <person name="Myers E.W."/>
            <person name="Venter J.C."/>
        </authorList>
    </citation>
    <scope>NUCLEOTIDE SEQUENCE [LARGE SCALE GENOMIC DNA]</scope>
</reference>
<reference key="6">
    <citation type="journal article" date="2004" name="Genome Res.">
        <title>The status, quality, and expansion of the NIH full-length cDNA project: the Mammalian Gene Collection (MGC).</title>
        <authorList>
            <consortium name="The MGC Project Team"/>
        </authorList>
    </citation>
    <scope>NUCLEOTIDE SEQUENCE [LARGE SCALE MRNA] (ISOFORMS I AND 3)</scope>
    <source>
        <tissue>Brain</tissue>
        <tissue>Kidney</tissue>
        <tissue>Lung carcinoma</tissue>
        <tissue>Skin</tissue>
        <tissue>Uterus</tissue>
    </source>
</reference>
<reference key="7">
    <citation type="journal article" date="1986" name="Cold Spring Harb. Symp. Quant. Biol.">
        <title>Molecular genetics of MIC2: a gene shared by the human X and Y chromosomes.</title>
        <authorList>
            <person name="Darling S.M."/>
            <person name="Goodfellow P.J."/>
            <person name="Pym B."/>
            <person name="Banting G.S."/>
            <person name="Pritchard C."/>
            <person name="Goodfellow P.N."/>
        </authorList>
    </citation>
    <scope>NUCLEOTIDE SEQUENCE [MRNA] OF 10-105</scope>
</reference>
<reference key="8">
    <citation type="journal article" date="1988" name="Proc. Natl. Acad. Sci. U.S.A.">
        <title>Absence of methylation of a CpG-rich region at the 5' end of the MIC2 gene on the active X, the inactive X, and the Y chromosome.</title>
        <authorList>
            <person name="Goodfellow P.J."/>
            <person name="Mondello C."/>
            <person name="Darling S.M."/>
            <person name="Pym B."/>
            <person name="Little P."/>
            <person name="Goodfellow P.N."/>
        </authorList>
    </citation>
    <scope>NUCLEOTIDE SEQUENCE [GENOMIC DNA] OF 1-22</scope>
</reference>
<reference key="9">
    <citation type="journal article" date="2011" name="BMC Syst. Biol.">
        <title>Initial characterization of the human central proteome.</title>
        <authorList>
            <person name="Burkard T.R."/>
            <person name="Planyavsky M."/>
            <person name="Kaupe I."/>
            <person name="Breitwieser F.P."/>
            <person name="Buerckstuemmer T."/>
            <person name="Bennett K.L."/>
            <person name="Superti-Furga G."/>
            <person name="Colinge J."/>
        </authorList>
    </citation>
    <scope>IDENTIFICATION BY MASS SPECTROMETRY [LARGE SCALE ANALYSIS]</scope>
</reference>
<reference key="10">
    <citation type="journal article" date="2013" name="J. Proteome Res.">
        <title>Toward a comprehensive characterization of a human cancer cell phosphoproteome.</title>
        <authorList>
            <person name="Zhou H."/>
            <person name="Di Palma S."/>
            <person name="Preisinger C."/>
            <person name="Peng M."/>
            <person name="Polat A.N."/>
            <person name="Heck A.J."/>
            <person name="Mohammed S."/>
        </authorList>
    </citation>
    <scope>PHOSPHORYLATION [LARGE SCALE ANALYSIS] AT SER-168 AND THR-181</scope>
    <scope>IDENTIFICATION BY MASS SPECTROMETRY [LARGE SCALE ANALYSIS]</scope>
    <source>
        <tissue>Cervix carcinoma</tissue>
        <tissue>Erythroleukemia</tissue>
    </source>
</reference>
<reference key="11">
    <citation type="journal article" date="2014" name="J. Proteomics">
        <title>An enzyme assisted RP-RPLC approach for in-depth analysis of human liver phosphoproteome.</title>
        <authorList>
            <person name="Bian Y."/>
            <person name="Song C."/>
            <person name="Cheng K."/>
            <person name="Dong M."/>
            <person name="Wang F."/>
            <person name="Huang J."/>
            <person name="Sun D."/>
            <person name="Wang L."/>
            <person name="Ye M."/>
            <person name="Zou H."/>
        </authorList>
    </citation>
    <scope>IDENTIFICATION BY MASS SPECTROMETRY [LARGE SCALE ANALYSIS]</scope>
    <source>
        <tissue>Liver</tissue>
    </source>
</reference>
<reference key="12">
    <citation type="journal article" date="2015" name="Proteomics">
        <title>N-terminome analysis of the human mitochondrial proteome.</title>
        <authorList>
            <person name="Vaca Jacome A.S."/>
            <person name="Rabilloud T."/>
            <person name="Schaeffer-Reiss C."/>
            <person name="Rompais M."/>
            <person name="Ayoub D."/>
            <person name="Lane L."/>
            <person name="Bairoch A."/>
            <person name="Van Dorsselaer A."/>
            <person name="Carapito C."/>
        </authorList>
    </citation>
    <scope>IDENTIFICATION BY MASS SPECTROMETRY [LARGE SCALE ANALYSIS]</scope>
</reference>
<organism>
    <name type="scientific">Homo sapiens</name>
    <name type="common">Human</name>
    <dbReference type="NCBI Taxonomy" id="9606"/>
    <lineage>
        <taxon>Eukaryota</taxon>
        <taxon>Metazoa</taxon>
        <taxon>Chordata</taxon>
        <taxon>Craniata</taxon>
        <taxon>Vertebrata</taxon>
        <taxon>Euteleostomi</taxon>
        <taxon>Mammalia</taxon>
        <taxon>Eutheria</taxon>
        <taxon>Euarchontoglires</taxon>
        <taxon>Primates</taxon>
        <taxon>Haplorrhini</taxon>
        <taxon>Catarrhini</taxon>
        <taxon>Hominidae</taxon>
        <taxon>Homo</taxon>
    </lineage>
</organism>
<evidence type="ECO:0000250" key="1"/>
<evidence type="ECO:0000255" key="2"/>
<evidence type="ECO:0000256" key="3">
    <source>
        <dbReference type="SAM" id="MobiDB-lite"/>
    </source>
</evidence>
<evidence type="ECO:0000269" key="4">
    <source>
    </source>
</evidence>
<evidence type="ECO:0000303" key="5">
    <source>
    </source>
</evidence>
<evidence type="ECO:0000303" key="6">
    <source ref="2"/>
</evidence>
<evidence type="ECO:0000305" key="7"/>
<evidence type="ECO:0007744" key="8">
    <source>
    </source>
</evidence>
<comment type="function">
    <text evidence="1">Involved in T-cell adhesion processes and in spontaneous rosette formation with erythrocytes. Plays a role in a late step of leukocyte extravasation helping leukocytes to overcome the endothelial basement membrane. Acts at the same site as, but independently of, PECAM1. Involved in T-cell adhesion processes (By similarity).</text>
</comment>
<comment type="subcellular location">
    <subcellularLocation>
        <location evidence="7">Membrane</location>
        <topology evidence="7">Single-pass type I membrane protein</topology>
    </subcellularLocation>
</comment>
<comment type="alternative products">
    <event type="alternative splicing"/>
    <isoform>
        <id>P14209-1</id>
        <name>I</name>
        <sequence type="displayed"/>
    </isoform>
    <isoform>
        <id>P14209-2</id>
        <name>II</name>
        <sequence type="described" ref="VSP_004324"/>
    </isoform>
    <isoform>
        <id>P14209-3</id>
        <name>3</name>
        <sequence type="described" ref="VSP_046315"/>
    </isoform>
</comment>
<comment type="PTM">
    <text>Extensively O-glycosylated.</text>
</comment>
<comment type="miscellaneous">
    <text>The gene coding for this protein is located in the pseudoautosomal region 1 (PAR1) of X and Y chromosomes.</text>
</comment>
<comment type="similarity">
    <text evidence="7">Belongs to the CD99 family.</text>
</comment>
<sequence>MARGAALALLLFGLLGVLVAAPDGGFDLSDALPDNENKKPTAIPKKPSAGDDFDLGDAVVDGENDDPRPPNPPKPMPNPNPNHPSSSGSFSDADLADGVSGGEGKGGSDGGGSHRKEGEEADAPGVIPGIVGAVVVAVAGAISSFIAYQKKKLCFKENAEQGEVDMESHRNANAEPAVQRTLLEK</sequence>
<keyword id="KW-0002">3D-structure</keyword>
<keyword id="KW-0025">Alternative splicing</keyword>
<keyword id="KW-0130">Cell adhesion</keyword>
<keyword id="KW-0903">Direct protein sequencing</keyword>
<keyword id="KW-0325">Glycoprotein</keyword>
<keyword id="KW-0472">Membrane</keyword>
<keyword id="KW-0597">Phosphoprotein</keyword>
<keyword id="KW-1267">Proteomics identification</keyword>
<keyword id="KW-1185">Reference proteome</keyword>
<keyword id="KW-0732">Signal</keyword>
<keyword id="KW-0812">Transmembrane</keyword>
<keyword id="KW-1133">Transmembrane helix</keyword>
<proteinExistence type="evidence at protein level"/>
<gene>
    <name type="primary">CD99</name>
    <name type="synonym">MIC2</name>
    <name type="synonym">MIC2X</name>
    <name type="synonym">MIC2Y</name>
</gene>
<name>CD99_HUMAN</name>
<accession>P14209</accession>
<accession>A6NIW1</accession>
<accession>O00518</accession>
<accession>Q6ICV7</accession>
<dbReference type="EMBL" id="X16996">
    <property type="protein sequence ID" value="CAA34863.1"/>
    <property type="molecule type" value="mRNA"/>
</dbReference>
<dbReference type="EMBL" id="U82164">
    <property type="protein sequence ID" value="AAB58501.1"/>
    <property type="molecule type" value="mRNA"/>
</dbReference>
<dbReference type="EMBL" id="CR450286">
    <property type="protein sequence ID" value="CAG29282.1"/>
    <property type="molecule type" value="mRNA"/>
</dbReference>
<dbReference type="EMBL" id="AC006209">
    <property type="status" value="NOT_ANNOTATED_CDS"/>
    <property type="molecule type" value="Genomic_DNA"/>
</dbReference>
<dbReference type="EMBL" id="CH471074">
    <property type="protein sequence ID" value="EAW98697.1"/>
    <property type="molecule type" value="Genomic_DNA"/>
</dbReference>
<dbReference type="EMBL" id="CH471074">
    <property type="protein sequence ID" value="EAW98698.1"/>
    <property type="molecule type" value="Genomic_DNA"/>
</dbReference>
<dbReference type="EMBL" id="BC002584">
    <property type="protein sequence ID" value="AAH02584.1"/>
    <property type="molecule type" value="mRNA"/>
</dbReference>
<dbReference type="EMBL" id="BC003147">
    <property type="protein sequence ID" value="AAH03147.1"/>
    <property type="molecule type" value="mRNA"/>
</dbReference>
<dbReference type="EMBL" id="BC010109">
    <property type="protein sequence ID" value="AAH10109.1"/>
    <property type="molecule type" value="mRNA"/>
</dbReference>
<dbReference type="EMBL" id="BC021620">
    <property type="protein sequence ID" value="AAH21620.1"/>
    <property type="molecule type" value="mRNA"/>
</dbReference>
<dbReference type="EMBL" id="BC024310">
    <property type="protein sequence ID" value="AAH24310.1"/>
    <property type="molecule type" value="mRNA"/>
</dbReference>
<dbReference type="EMBL" id="BQ948496">
    <property type="status" value="NOT_ANNOTATED_CDS"/>
    <property type="molecule type" value="mRNA"/>
</dbReference>
<dbReference type="EMBL" id="M16279">
    <property type="protein sequence ID" value="AAA02999.1"/>
    <property type="molecule type" value="mRNA"/>
</dbReference>
<dbReference type="EMBL" id="J03841">
    <property type="protein sequence ID" value="AAA59848.1"/>
    <property type="molecule type" value="Genomic_DNA"/>
</dbReference>
<dbReference type="CCDS" id="CCDS14119.1">
    <molecule id="P14209-1"/>
</dbReference>
<dbReference type="CCDS" id="CCDS48071.1">
    <molecule id="P14209-3"/>
</dbReference>
<dbReference type="CCDS" id="CCDS75947.1">
    <molecule id="P14209-2"/>
</dbReference>
<dbReference type="PIR" id="S06786">
    <property type="entry name" value="A60592"/>
</dbReference>
<dbReference type="RefSeq" id="NP_001116370.1">
    <molecule id="P14209-3"/>
    <property type="nucleotide sequence ID" value="NM_001122898.3"/>
</dbReference>
<dbReference type="RefSeq" id="NP_001308296.1">
    <molecule id="P14209-2"/>
    <property type="nucleotide sequence ID" value="NM_001321367.2"/>
</dbReference>
<dbReference type="RefSeq" id="NP_001308297.1">
    <property type="nucleotide sequence ID" value="NM_001321368.1"/>
</dbReference>
<dbReference type="RefSeq" id="NP_001308298.1">
    <property type="nucleotide sequence ID" value="NM_001321369.1"/>
</dbReference>
<dbReference type="RefSeq" id="NP_002405.1">
    <molecule id="P14209-1"/>
    <property type="nucleotide sequence ID" value="NM_002414.5"/>
</dbReference>
<dbReference type="PDB" id="7SFX">
    <property type="method" value="X-ray"/>
    <property type="resolution" value="3.10 A"/>
    <property type="chains" value="E/F=63-76"/>
</dbReference>
<dbReference type="PDBsum" id="7SFX"/>
<dbReference type="SMR" id="P14209"/>
<dbReference type="BioGRID" id="110420">
    <property type="interactions" value="82"/>
</dbReference>
<dbReference type="FunCoup" id="P14209">
    <property type="interactions" value="340"/>
</dbReference>
<dbReference type="IntAct" id="P14209">
    <property type="interactions" value="17"/>
</dbReference>
<dbReference type="MINT" id="P14209"/>
<dbReference type="STRING" id="9606.ENSP00000370588"/>
<dbReference type="BindingDB" id="P14209"/>
<dbReference type="ChEMBL" id="CHEMBL5465269"/>
<dbReference type="GlyConnect" id="2923">
    <property type="glycosylation" value="1 O-Linked glycan (1 site)"/>
</dbReference>
<dbReference type="GlyCosmos" id="P14209">
    <property type="glycosylation" value="4 sites, 1 glycan"/>
</dbReference>
<dbReference type="GlyGen" id="P14209">
    <property type="glycosylation" value="9 sites, 3 O-linked glycans (8 sites)"/>
</dbReference>
<dbReference type="iPTMnet" id="P14209"/>
<dbReference type="PhosphoSitePlus" id="P14209"/>
<dbReference type="SwissPalm" id="P14209"/>
<dbReference type="BioMuta" id="CD99"/>
<dbReference type="DMDM" id="119049"/>
<dbReference type="jPOST" id="P14209"/>
<dbReference type="MassIVE" id="P14209"/>
<dbReference type="PaxDb" id="9606-ENSP00000370588"/>
<dbReference type="PeptideAtlas" id="P14209"/>
<dbReference type="ProteomicsDB" id="1291"/>
<dbReference type="ProteomicsDB" id="53032">
    <molecule id="P14209-1"/>
</dbReference>
<dbReference type="ProteomicsDB" id="53033">
    <molecule id="P14209-2"/>
</dbReference>
<dbReference type="Pumba" id="P14209"/>
<dbReference type="ABCD" id="P14209">
    <property type="antibodies" value="1 sequenced antibody"/>
</dbReference>
<dbReference type="Antibodypedia" id="3499">
    <property type="antibodies" value="1950 antibodies from 50 providers"/>
</dbReference>
<dbReference type="DNASU" id="4267"/>
<dbReference type="Ensembl" id="ENST00000381187.8">
    <molecule id="P14209-3"/>
    <property type="protein sequence ID" value="ENSP00000370582.3"/>
    <property type="gene ID" value="ENSG00000002586.20"/>
</dbReference>
<dbReference type="Ensembl" id="ENST00000381192.10">
    <molecule id="P14209-1"/>
    <property type="protein sequence ID" value="ENSP00000370588.3"/>
    <property type="gene ID" value="ENSG00000002586.20"/>
</dbReference>
<dbReference type="Ensembl" id="ENST00000482405.7">
    <molecule id="P14209-2"/>
    <property type="protein sequence ID" value="ENSP00000494027.1"/>
    <property type="gene ID" value="ENSG00000002586.20"/>
</dbReference>
<dbReference type="Ensembl" id="ENST00000611428.5">
    <molecule id="P14209-2"/>
    <property type="protein sequence ID" value="ENSP00000479999.1"/>
    <property type="gene ID" value="ENSG00000002586.20"/>
</dbReference>
<dbReference type="Ensembl" id="ENST00000623253.4">
    <molecule id="P14209-2"/>
    <property type="protein sequence ID" value="ENSP00000485545.1"/>
    <property type="gene ID" value="ENSG00000002586.20"/>
</dbReference>
<dbReference type="Ensembl" id="ENST00000711155.1">
    <molecule id="P14209-2"/>
    <property type="protein sequence ID" value="ENSP00000518644.1"/>
    <property type="gene ID" value="ENSG00000292348.1"/>
</dbReference>
<dbReference type="Ensembl" id="ENST00000711159.1">
    <molecule id="P14209-2"/>
    <property type="protein sequence ID" value="ENSP00000518647.1"/>
    <property type="gene ID" value="ENSG00000292348.1"/>
</dbReference>
<dbReference type="Ensembl" id="ENST00000711160.1">
    <molecule id="P14209-1"/>
    <property type="protein sequence ID" value="ENSP00000518648.1"/>
    <property type="gene ID" value="ENSG00000292348.1"/>
</dbReference>
<dbReference type="Ensembl" id="ENST00000711164.1">
    <molecule id="P14209-3"/>
    <property type="protein sequence ID" value="ENSP00000518650.1"/>
    <property type="gene ID" value="ENSG00000292348.1"/>
</dbReference>
<dbReference type="Ensembl" id="ENST00000711165.1">
    <molecule id="P14209-2"/>
    <property type="protein sequence ID" value="ENSP00000518651.1"/>
    <property type="gene ID" value="ENSG00000292348.1"/>
</dbReference>
<dbReference type="GeneID" id="4267"/>
<dbReference type="KEGG" id="hsa:4267"/>
<dbReference type="MANE-Select" id="ENST00000381192.10">
    <property type="protein sequence ID" value="ENSP00000370588.3"/>
    <property type="RefSeq nucleotide sequence ID" value="NM_002414.5"/>
    <property type="RefSeq protein sequence ID" value="NP_002405.1"/>
</dbReference>
<dbReference type="UCSC" id="uc004cqm.4">
    <molecule id="P14209-1"/>
    <property type="organism name" value="human"/>
</dbReference>
<dbReference type="AGR" id="HGNC:7082"/>
<dbReference type="CTD" id="4267"/>
<dbReference type="DisGeNET" id="4267"/>
<dbReference type="GeneCards" id="CD99"/>
<dbReference type="HGNC" id="HGNC:7082">
    <property type="gene designation" value="CD99"/>
</dbReference>
<dbReference type="HPA" id="ENSG00000002586">
    <property type="expression patterns" value="Low tissue specificity"/>
</dbReference>
<dbReference type="MIM" id="313470">
    <property type="type" value="gene"/>
</dbReference>
<dbReference type="MIM" id="450000">
    <property type="type" value="gene"/>
</dbReference>
<dbReference type="neXtProt" id="NX_P14209"/>
<dbReference type="OpenTargets" id="ENSG00000002586"/>
<dbReference type="PharmGKB" id="PA30804"/>
<dbReference type="VEuPathDB" id="HostDB:ENSG00000002586"/>
<dbReference type="eggNOG" id="ENOG502S70S">
    <property type="taxonomic scope" value="Eukaryota"/>
</dbReference>
<dbReference type="GeneTree" id="ENSGT00940000154344"/>
<dbReference type="HOGENOM" id="CLU_092825_1_1_1"/>
<dbReference type="InParanoid" id="P14209"/>
<dbReference type="OMA" id="QNHRNTN"/>
<dbReference type="OrthoDB" id="8963727at2759"/>
<dbReference type="PAN-GO" id="P14209">
    <property type="GO annotations" value="4 GO annotations based on evolutionary models"/>
</dbReference>
<dbReference type="PhylomeDB" id="P14209"/>
<dbReference type="TreeFam" id="TF336273"/>
<dbReference type="PathwayCommons" id="P14209"/>
<dbReference type="Reactome" id="R-HSA-198933">
    <property type="pathway name" value="Immunoregulatory interactions between a Lymphoid and a non-Lymphoid cell"/>
</dbReference>
<dbReference type="Reactome" id="R-HSA-202733">
    <property type="pathway name" value="Cell surface interactions at the vascular wall"/>
</dbReference>
<dbReference type="SignaLink" id="P14209"/>
<dbReference type="BioGRID-ORCS" id="4267">
    <property type="hits" value="6 hits in 622 CRISPR screens"/>
</dbReference>
<dbReference type="ChiTaRS" id="CD99">
    <property type="organism name" value="human"/>
</dbReference>
<dbReference type="GeneWiki" id="CD99"/>
<dbReference type="GenomeRNAi" id="4267"/>
<dbReference type="Pharos" id="P14209">
    <property type="development level" value="Tbio"/>
</dbReference>
<dbReference type="PRO" id="PR:P14209"/>
<dbReference type="Proteomes" id="UP000005640">
    <property type="component" value="Chromosome X"/>
</dbReference>
<dbReference type="Proteomes" id="UP000005640">
    <property type="component" value="Chromosome Y"/>
</dbReference>
<dbReference type="RNAct" id="P14209">
    <property type="molecule type" value="protein"/>
</dbReference>
<dbReference type="Bgee" id="ENSG00000002586">
    <property type="expression patterns" value="Expressed in type B pancreatic cell and 211 other cell types or tissues"/>
</dbReference>
<dbReference type="ExpressionAtlas" id="P14209">
    <property type="expression patterns" value="baseline and differential"/>
</dbReference>
<dbReference type="GO" id="GO:0005737">
    <property type="term" value="C:cytoplasm"/>
    <property type="evidence" value="ECO:0000304"/>
    <property type="project" value="ProtInc"/>
</dbReference>
<dbReference type="GO" id="GO:0005925">
    <property type="term" value="C:focal adhesion"/>
    <property type="evidence" value="ECO:0007005"/>
    <property type="project" value="UniProtKB"/>
</dbReference>
<dbReference type="GO" id="GO:0005886">
    <property type="term" value="C:plasma membrane"/>
    <property type="evidence" value="ECO:0000318"/>
    <property type="project" value="GO_Central"/>
</dbReference>
<dbReference type="GO" id="GO:0034109">
    <property type="term" value="P:homotypic cell-cell adhesion"/>
    <property type="evidence" value="ECO:0000318"/>
    <property type="project" value="GO_Central"/>
</dbReference>
<dbReference type="GO" id="GO:2000391">
    <property type="term" value="P:positive regulation of neutrophil extravasation"/>
    <property type="evidence" value="ECO:0000318"/>
    <property type="project" value="GO_Central"/>
</dbReference>
<dbReference type="GO" id="GO:0072683">
    <property type="term" value="P:T cell extravasation"/>
    <property type="evidence" value="ECO:0000318"/>
    <property type="project" value="GO_Central"/>
</dbReference>
<dbReference type="InterPro" id="IPR022078">
    <property type="entry name" value="CD99L2"/>
</dbReference>
<dbReference type="PANTHER" id="PTHR15076:SF15">
    <property type="entry name" value="CD99 ANTIGEN"/>
    <property type="match status" value="1"/>
</dbReference>
<dbReference type="PANTHER" id="PTHR15076">
    <property type="entry name" value="CD99/MIC2 PROTEIN RELATED"/>
    <property type="match status" value="1"/>
</dbReference>
<dbReference type="Pfam" id="PF12301">
    <property type="entry name" value="CD99L2"/>
    <property type="match status" value="1"/>
</dbReference>
<feature type="signal peptide" evidence="4">
    <location>
        <begin position="1"/>
        <end position="22"/>
    </location>
</feature>
<feature type="chain" id="PRO_0000021726" description="CD99 antigen">
    <location>
        <begin position="23"/>
        <end position="185"/>
    </location>
</feature>
<feature type="topological domain" description="Extracellular" evidence="2">
    <location>
        <begin position="23"/>
        <end position="122"/>
    </location>
</feature>
<feature type="transmembrane region" description="Helical" evidence="2">
    <location>
        <begin position="123"/>
        <end position="147"/>
    </location>
</feature>
<feature type="topological domain" description="Cytoplasmic" evidence="2">
    <location>
        <begin position="148"/>
        <end position="185"/>
    </location>
</feature>
<feature type="region of interest" description="Disordered" evidence="3">
    <location>
        <begin position="27"/>
        <end position="124"/>
    </location>
</feature>
<feature type="region of interest" description="Disordered" evidence="3">
    <location>
        <begin position="160"/>
        <end position="185"/>
    </location>
</feature>
<feature type="compositionally biased region" description="Acidic residues" evidence="3">
    <location>
        <begin position="51"/>
        <end position="64"/>
    </location>
</feature>
<feature type="compositionally biased region" description="Pro residues" evidence="3">
    <location>
        <begin position="69"/>
        <end position="82"/>
    </location>
</feature>
<feature type="compositionally biased region" description="Low complexity" evidence="3">
    <location>
        <begin position="83"/>
        <end position="92"/>
    </location>
</feature>
<feature type="compositionally biased region" description="Gly residues" evidence="3">
    <location>
        <begin position="99"/>
        <end position="111"/>
    </location>
</feature>
<feature type="modified residue" description="Phosphoserine" evidence="8">
    <location>
        <position position="168"/>
    </location>
</feature>
<feature type="modified residue" description="Phosphothreonine" evidence="8">
    <location>
        <position position="181"/>
    </location>
</feature>
<feature type="splice variant" id="VSP_046315" description="In isoform 3." evidence="5">
    <location>
        <begin position="34"/>
        <end position="49"/>
    </location>
</feature>
<feature type="splice variant" id="VSP_004324" description="In isoform II." evidence="6">
    <original>AEQGEVDMESHRNANAEPAVQRTLLEK</original>
    <variation>DG</variation>
    <location>
        <begin position="159"/>
        <end position="185"/>
    </location>
</feature>
<feature type="sequence variant" id="VAR_014733" description="In dbSNP:rs4793.">
    <original>M</original>
    <variation>V</variation>
    <location>
        <position position="166"/>
    </location>
</feature>
<feature type="sequence variant" id="VAR_014734" description="In dbSNP:rs4717.">
    <original>N</original>
    <variation>I</variation>
    <location>
        <position position="173"/>
    </location>
</feature>
<protein>
    <recommendedName>
        <fullName>CD99 antigen</fullName>
    </recommendedName>
    <alternativeName>
        <fullName>12E7</fullName>
    </alternativeName>
    <alternativeName>
        <fullName>E2 antigen</fullName>
    </alternativeName>
    <alternativeName>
        <fullName>Protein MIC2</fullName>
    </alternativeName>
    <alternativeName>
        <fullName>T-cell surface glycoprotein E2</fullName>
    </alternativeName>
    <cdAntigenName>CD99</cdAntigenName>
</protein>